<feature type="chain" id="PRO_0000281848" description="tRNA wybutosine-synthesizing protein 3">
    <location>
        <begin position="1"/>
        <end position="237"/>
    </location>
</feature>
<comment type="function">
    <text evidence="1">S-adenosyl-L-methionine-dependent methyltransferase that acts as a component of the wybutosine biosynthesis pathway. Wybutosine is a hyper modified guanosine with a tricyclic base found at the 3'-position adjacent to the anticodon of eukaryotic phenylalanine tRNA. Probably methylates N-4 position of wybutosine-86 to produce wybutosine-72 (By similarity).</text>
</comment>
<comment type="catalytic activity">
    <reaction>
        <text>4-demethyl-7-[(3S)-3-amino-3-carboxypropyl]wyosine(37) in tRNA(Phe) + S-adenosyl-L-methionine = 7-[(3S)-3-amino-3-carboxypropyl]wyosine(37) in tRNA(Phe) + S-adenosyl-L-homocysteine + H(+)</text>
        <dbReference type="Rhea" id="RHEA:36635"/>
        <dbReference type="Rhea" id="RHEA-COMP:10378"/>
        <dbReference type="Rhea" id="RHEA-COMP:10379"/>
        <dbReference type="ChEBI" id="CHEBI:15378"/>
        <dbReference type="ChEBI" id="CHEBI:57856"/>
        <dbReference type="ChEBI" id="CHEBI:59789"/>
        <dbReference type="ChEBI" id="CHEBI:73543"/>
        <dbReference type="ChEBI" id="CHEBI:73550"/>
        <dbReference type="EC" id="2.1.1.282"/>
    </reaction>
</comment>
<comment type="pathway">
    <text>tRNA modification; wybutosine-tRNA(Phe) biosynthesis.</text>
</comment>
<comment type="similarity">
    <text evidence="2">Belongs to the TYW3 family.</text>
</comment>
<keyword id="KW-0489">Methyltransferase</keyword>
<keyword id="KW-1185">Reference proteome</keyword>
<keyword id="KW-0949">S-adenosyl-L-methionine</keyword>
<keyword id="KW-0808">Transferase</keyword>
<keyword id="KW-0819">tRNA processing</keyword>
<name>TYW3_SCHPO</name>
<accession>Q9UTA5</accession>
<dbReference type="EC" id="2.1.1.282"/>
<dbReference type="EMBL" id="CU329670">
    <property type="protein sequence ID" value="CAB61781.1"/>
    <property type="molecule type" value="Genomic_DNA"/>
</dbReference>
<dbReference type="PIR" id="T50202">
    <property type="entry name" value="T50202"/>
</dbReference>
<dbReference type="RefSeq" id="NP_594475.1">
    <property type="nucleotide sequence ID" value="NM_001019904.2"/>
</dbReference>
<dbReference type="SMR" id="Q9UTA5"/>
<dbReference type="BioGRID" id="279180">
    <property type="interactions" value="1"/>
</dbReference>
<dbReference type="FunCoup" id="Q9UTA5">
    <property type="interactions" value="86"/>
</dbReference>
<dbReference type="STRING" id="284812.Q9UTA5"/>
<dbReference type="iPTMnet" id="Q9UTA5"/>
<dbReference type="PaxDb" id="4896-SPAC25B8.15c.1"/>
<dbReference type="EnsemblFungi" id="SPAC25B8.15c.1">
    <property type="protein sequence ID" value="SPAC25B8.15c.1:pep"/>
    <property type="gene ID" value="SPAC25B8.15c"/>
</dbReference>
<dbReference type="GeneID" id="2542730"/>
<dbReference type="KEGG" id="spo:2542730"/>
<dbReference type="PomBase" id="SPAC25B8.15c">
    <property type="gene designation" value="tyw3"/>
</dbReference>
<dbReference type="VEuPathDB" id="FungiDB:SPAC25B8.15c"/>
<dbReference type="eggNOG" id="KOG1228">
    <property type="taxonomic scope" value="Eukaryota"/>
</dbReference>
<dbReference type="HOGENOM" id="CLU_047426_0_0_1"/>
<dbReference type="InParanoid" id="Q9UTA5"/>
<dbReference type="OMA" id="THRICAK"/>
<dbReference type="PhylomeDB" id="Q9UTA5"/>
<dbReference type="UniPathway" id="UPA00375"/>
<dbReference type="PRO" id="PR:Q9UTA5"/>
<dbReference type="Proteomes" id="UP000002485">
    <property type="component" value="Chromosome I"/>
</dbReference>
<dbReference type="GO" id="GO:0005829">
    <property type="term" value="C:cytosol"/>
    <property type="evidence" value="ECO:0007005"/>
    <property type="project" value="PomBase"/>
</dbReference>
<dbReference type="GO" id="GO:0005634">
    <property type="term" value="C:nucleus"/>
    <property type="evidence" value="ECO:0007005"/>
    <property type="project" value="PomBase"/>
</dbReference>
<dbReference type="GO" id="GO:0008175">
    <property type="term" value="F:tRNA methyltransferase activity"/>
    <property type="evidence" value="ECO:0000266"/>
    <property type="project" value="PomBase"/>
</dbReference>
<dbReference type="GO" id="GO:0030488">
    <property type="term" value="P:tRNA methylation"/>
    <property type="evidence" value="ECO:0000266"/>
    <property type="project" value="PomBase"/>
</dbReference>
<dbReference type="GO" id="GO:0031591">
    <property type="term" value="P:wybutosine biosynthetic process"/>
    <property type="evidence" value="ECO:0000266"/>
    <property type="project" value="PomBase"/>
</dbReference>
<dbReference type="FunFam" id="3.30.1960.10:FF:000003">
    <property type="entry name" value="tRNA methyltransferase"/>
    <property type="match status" value="1"/>
</dbReference>
<dbReference type="Gene3D" id="3.30.1960.10">
    <property type="entry name" value="tRNA wybutosine-synthesizing-like"/>
    <property type="match status" value="1"/>
</dbReference>
<dbReference type="InterPro" id="IPR003827">
    <property type="entry name" value="tRNA_yW-synthesising"/>
</dbReference>
<dbReference type="InterPro" id="IPR036602">
    <property type="entry name" value="tRNA_yW-synthesising-like_sf"/>
</dbReference>
<dbReference type="PANTHER" id="PTHR48418">
    <property type="entry name" value="TRNA WYBUTOSINE-SYNTHESIZING PROTEIN 3"/>
    <property type="match status" value="1"/>
</dbReference>
<dbReference type="PANTHER" id="PTHR48418:SF1">
    <property type="entry name" value="TRNA WYBUTOSINE-SYNTHESIZING PROTEIN 3"/>
    <property type="match status" value="1"/>
</dbReference>
<dbReference type="Pfam" id="PF02676">
    <property type="entry name" value="TYW3"/>
    <property type="match status" value="1"/>
</dbReference>
<dbReference type="SUPFAM" id="SSF111278">
    <property type="entry name" value="SSo0622-like"/>
    <property type="match status" value="1"/>
</dbReference>
<reference key="1">
    <citation type="journal article" date="2002" name="Nature">
        <title>The genome sequence of Schizosaccharomyces pombe.</title>
        <authorList>
            <person name="Wood V."/>
            <person name="Gwilliam R."/>
            <person name="Rajandream M.A."/>
            <person name="Lyne M.H."/>
            <person name="Lyne R."/>
            <person name="Stewart A."/>
            <person name="Sgouros J.G."/>
            <person name="Peat N."/>
            <person name="Hayles J."/>
            <person name="Baker S.G."/>
            <person name="Basham D."/>
            <person name="Bowman S."/>
            <person name="Brooks K."/>
            <person name="Brown D."/>
            <person name="Brown S."/>
            <person name="Chillingworth T."/>
            <person name="Churcher C.M."/>
            <person name="Collins M."/>
            <person name="Connor R."/>
            <person name="Cronin A."/>
            <person name="Davis P."/>
            <person name="Feltwell T."/>
            <person name="Fraser A."/>
            <person name="Gentles S."/>
            <person name="Goble A."/>
            <person name="Hamlin N."/>
            <person name="Harris D.E."/>
            <person name="Hidalgo J."/>
            <person name="Hodgson G."/>
            <person name="Holroyd S."/>
            <person name="Hornsby T."/>
            <person name="Howarth S."/>
            <person name="Huckle E.J."/>
            <person name="Hunt S."/>
            <person name="Jagels K."/>
            <person name="James K.D."/>
            <person name="Jones L."/>
            <person name="Jones M."/>
            <person name="Leather S."/>
            <person name="McDonald S."/>
            <person name="McLean J."/>
            <person name="Mooney P."/>
            <person name="Moule S."/>
            <person name="Mungall K.L."/>
            <person name="Murphy L.D."/>
            <person name="Niblett D."/>
            <person name="Odell C."/>
            <person name="Oliver K."/>
            <person name="O'Neil S."/>
            <person name="Pearson D."/>
            <person name="Quail M.A."/>
            <person name="Rabbinowitsch E."/>
            <person name="Rutherford K.M."/>
            <person name="Rutter S."/>
            <person name="Saunders D."/>
            <person name="Seeger K."/>
            <person name="Sharp S."/>
            <person name="Skelton J."/>
            <person name="Simmonds M.N."/>
            <person name="Squares R."/>
            <person name="Squares S."/>
            <person name="Stevens K."/>
            <person name="Taylor K."/>
            <person name="Taylor R.G."/>
            <person name="Tivey A."/>
            <person name="Walsh S.V."/>
            <person name="Warren T."/>
            <person name="Whitehead S."/>
            <person name="Woodward J.R."/>
            <person name="Volckaert G."/>
            <person name="Aert R."/>
            <person name="Robben J."/>
            <person name="Grymonprez B."/>
            <person name="Weltjens I."/>
            <person name="Vanstreels E."/>
            <person name="Rieger M."/>
            <person name="Schaefer M."/>
            <person name="Mueller-Auer S."/>
            <person name="Gabel C."/>
            <person name="Fuchs M."/>
            <person name="Duesterhoeft A."/>
            <person name="Fritzc C."/>
            <person name="Holzer E."/>
            <person name="Moestl D."/>
            <person name="Hilbert H."/>
            <person name="Borzym K."/>
            <person name="Langer I."/>
            <person name="Beck A."/>
            <person name="Lehrach H."/>
            <person name="Reinhardt R."/>
            <person name="Pohl T.M."/>
            <person name="Eger P."/>
            <person name="Zimmermann W."/>
            <person name="Wedler H."/>
            <person name="Wambutt R."/>
            <person name="Purnelle B."/>
            <person name="Goffeau A."/>
            <person name="Cadieu E."/>
            <person name="Dreano S."/>
            <person name="Gloux S."/>
            <person name="Lelaure V."/>
            <person name="Mottier S."/>
            <person name="Galibert F."/>
            <person name="Aves S.J."/>
            <person name="Xiang Z."/>
            <person name="Hunt C."/>
            <person name="Moore K."/>
            <person name="Hurst S.M."/>
            <person name="Lucas M."/>
            <person name="Rochet M."/>
            <person name="Gaillardin C."/>
            <person name="Tallada V.A."/>
            <person name="Garzon A."/>
            <person name="Thode G."/>
            <person name="Daga R.R."/>
            <person name="Cruzado L."/>
            <person name="Jimenez J."/>
            <person name="Sanchez M."/>
            <person name="del Rey F."/>
            <person name="Benito J."/>
            <person name="Dominguez A."/>
            <person name="Revuelta J.L."/>
            <person name="Moreno S."/>
            <person name="Armstrong J."/>
            <person name="Forsburg S.L."/>
            <person name="Cerutti L."/>
            <person name="Lowe T."/>
            <person name="McCombie W.R."/>
            <person name="Paulsen I."/>
            <person name="Potashkin J."/>
            <person name="Shpakovski G.V."/>
            <person name="Ussery D."/>
            <person name="Barrell B.G."/>
            <person name="Nurse P."/>
        </authorList>
    </citation>
    <scope>NUCLEOTIDE SEQUENCE [LARGE SCALE GENOMIC DNA]</scope>
    <source>
        <strain>972 / ATCC 24843</strain>
    </source>
</reference>
<evidence type="ECO:0000250" key="1"/>
<evidence type="ECO:0000305" key="2"/>
<proteinExistence type="inferred from homology"/>
<gene>
    <name type="primary">tyw3</name>
    <name type="ORF">SPAC25B8.15c</name>
</gene>
<organism>
    <name type="scientific">Schizosaccharomyces pombe (strain 972 / ATCC 24843)</name>
    <name type="common">Fission yeast</name>
    <dbReference type="NCBI Taxonomy" id="284812"/>
    <lineage>
        <taxon>Eukaryota</taxon>
        <taxon>Fungi</taxon>
        <taxon>Dikarya</taxon>
        <taxon>Ascomycota</taxon>
        <taxon>Taphrinomycotina</taxon>
        <taxon>Schizosaccharomycetes</taxon>
        <taxon>Schizosaccharomycetales</taxon>
        <taxon>Schizosaccharomycetaceae</taxon>
        <taxon>Schizosaccharomyces</taxon>
    </lineage>
</organism>
<sequence>MNIKGIDVSFDAQKKEILEGLKSSVPDASPKGHPDSPIFPLLDVINSHPDWVTTSSCSGRISVYVQGANSRKGGGYWLFVSHQAHEELPPVLEDEKVEYGKVPSSPVEGNREIQYAFEPMILHVQTRSLANAQHLQRVAASCGFRETGIQGSEQKFIVAIRTSLRMDIPIGCLTASEKLQFYITREYMCFLFKRSVEYFTENGNRMARLKEQLERQVEKRMKPRRKLRNMDDYLVQS</sequence>
<protein>
    <recommendedName>
        <fullName>tRNA wybutosine-synthesizing protein 3</fullName>
        <shortName>tRNA-yW-synthesizing protein 3</shortName>
        <ecNumber>2.1.1.282</ecNumber>
    </recommendedName>
    <alternativeName>
        <fullName>tRNA(Phe) 7-((3-amino-3-carboxypropyl)-4-demethylwyosine(37)-N(4))-methyltransferase</fullName>
    </alternativeName>
</protein>